<geneLocation type="plasmid">
    <name>pXO1</name>
</geneLocation>
<gene>
    <name type="ordered locus">pXO1-111</name>
    <name type="ordered locus">BXA0163</name>
    <name type="ordered locus">GBAA_pXO1_0163</name>
</gene>
<sequence>MESLGINNIYNALDRIKLNAKMNILVRDPYHYDNNGNIVGVDDSYLKNAYKQILNWSSDGVSLNLDEDVNQALSGYMLQIKKPSNHLTNSPVTITLAGKDSGVGELYRVLSDGTGFLDFNKFDENWRSLVDPGDDVYVYAVTKEDFNAVTRDENGNIANKLKNTLVLSGKIKEINIKTTNINIFVVFMFIIYLLFYIISSTVFAKSCNCILIYVEVSQLMNSVFY</sequence>
<comment type="subcellular location">
    <subcellularLocation>
        <location evidence="2">Cell membrane</location>
        <topology evidence="2">Single-pass membrane protein</topology>
    </subcellularLocation>
</comment>
<comment type="sequence caution" evidence="2">
    <conflict type="erroneous initiation">
        <sequence resource="EMBL-CDS" id="AAA22636"/>
    </conflict>
</comment>
<comment type="sequence caution" evidence="2">
    <conflict type="erroneous initiation">
        <sequence resource="EMBL-CDS" id="AAD32415"/>
    </conflict>
</comment>
<organism>
    <name type="scientific">Bacillus anthracis</name>
    <dbReference type="NCBI Taxonomy" id="1392"/>
    <lineage>
        <taxon>Bacteria</taxon>
        <taxon>Bacillati</taxon>
        <taxon>Bacillota</taxon>
        <taxon>Bacilli</taxon>
        <taxon>Bacillales</taxon>
        <taxon>Bacillaceae</taxon>
        <taxon>Bacillus</taxon>
        <taxon>Bacillus cereus group</taxon>
    </lineage>
</organism>
<dbReference type="EMBL" id="M22589">
    <property type="protein sequence ID" value="AAA22636.1"/>
    <property type="status" value="ALT_INIT"/>
    <property type="molecule type" value="Genomic_DNA"/>
</dbReference>
<dbReference type="EMBL" id="AF065404">
    <property type="protein sequence ID" value="AAD32415.1"/>
    <property type="status" value="ALT_INIT"/>
    <property type="molecule type" value="Genomic_DNA"/>
</dbReference>
<dbReference type="EMBL" id="AE011190">
    <property type="protein sequence ID" value="AAM26108.1"/>
    <property type="molecule type" value="Genomic_DNA"/>
</dbReference>
<dbReference type="EMBL" id="AE017336">
    <property type="protein sequence ID" value="AAT28903.2"/>
    <property type="molecule type" value="Genomic_DNA"/>
</dbReference>
<dbReference type="PIR" id="G59104">
    <property type="entry name" value="G59104"/>
</dbReference>
<dbReference type="PIR" id="I39933">
    <property type="entry name" value="I39933"/>
</dbReference>
<dbReference type="RefSeq" id="NP_052807.1">
    <property type="nucleotide sequence ID" value="NC_001496.1"/>
</dbReference>
<dbReference type="RefSeq" id="WP_000444608.1">
    <property type="nucleotide sequence ID" value="NZ_VTZH01000015.1"/>
</dbReference>
<dbReference type="RefSeq" id="WP_010890026.1">
    <property type="nucleotide sequence ID" value="NZ_VLYM01000017.1"/>
</dbReference>
<dbReference type="SMR" id="P13422"/>
<dbReference type="GeneID" id="45025511"/>
<dbReference type="KEGG" id="bar:GBAA_pXO1_0163"/>
<dbReference type="HOGENOM" id="CLU_1227876_0_0_9"/>
<dbReference type="PHI-base" id="PHI:4089"/>
<dbReference type="Proteomes" id="UP000000594">
    <property type="component" value="Plasmid pXO1"/>
</dbReference>
<dbReference type="GO" id="GO:0005886">
    <property type="term" value="C:plasma membrane"/>
    <property type="evidence" value="ECO:0007669"/>
    <property type="project" value="UniProtKB-SubCell"/>
</dbReference>
<dbReference type="Gene3D" id="2.60.40.810">
    <property type="match status" value="1"/>
</dbReference>
<dbReference type="InterPro" id="IPR027441">
    <property type="entry name" value="PA_dom_4"/>
</dbReference>
<dbReference type="InterPro" id="IPR048853">
    <property type="entry name" value="PA_Ig-like"/>
</dbReference>
<dbReference type="Pfam" id="PF20835">
    <property type="entry name" value="PA_Ig-like"/>
    <property type="match status" value="1"/>
</dbReference>
<dbReference type="SUPFAM" id="SSF56988">
    <property type="entry name" value="Anthrax protective antigen"/>
    <property type="match status" value="1"/>
</dbReference>
<proteinExistence type="predicted"/>
<feature type="chain" id="PRO_0000216825" description="Uncharacterized protein pXO1-111/BXA0163/GBAA_pXO1_0163">
    <location>
        <begin position="1"/>
        <end position="225"/>
    </location>
</feature>
<feature type="transmembrane region" description="Helical" evidence="1">
    <location>
        <begin position="181"/>
        <end position="203"/>
    </location>
</feature>
<feature type="sequence conflict" description="In Ref. 1; AAA22636." evidence="2" ref="1">
    <original>T</original>
    <variation>A</variation>
    <location>
        <position position="114"/>
    </location>
</feature>
<feature type="sequence conflict" description="In Ref. 1; AAA22636." evidence="2" ref="1">
    <original>KSCNCILIYVEVSQLMNSVFY</original>
    <variation>NHVIVYLSM</variation>
    <location>
        <begin position="205"/>
        <end position="225"/>
    </location>
</feature>
<evidence type="ECO:0000255" key="1"/>
<evidence type="ECO:0000305" key="2"/>
<name>Y6163_BACAN</name>
<reference key="1">
    <citation type="journal article" date="1988" name="Gene">
        <title>Sequence and analysis of the DNA encoding protective antigen of Bacillus anthracis.</title>
        <authorList>
            <person name="Welkos S.L."/>
            <person name="Lowe J.R."/>
            <person name="Eden-Mccutchan F."/>
            <person name="Vodkin M."/>
            <person name="Leppla S.H."/>
            <person name="Schmidt J.J."/>
        </authorList>
    </citation>
    <scope>NUCLEOTIDE SEQUENCE [GENOMIC DNA]</scope>
</reference>
<reference key="2">
    <citation type="journal article" date="1999" name="J. Bacteriol.">
        <title>Sequence and organization of pXO1, the large Bacillus anthracis plasmid harboring the anthrax toxin genes.</title>
        <authorList>
            <person name="Okinaka R.T."/>
            <person name="Cloud K."/>
            <person name="Hampton O."/>
            <person name="Hoffmaster A.R."/>
            <person name="Hill K.K."/>
            <person name="Keim P."/>
            <person name="Koehler T.M."/>
            <person name="Lamke G."/>
            <person name="Kumano S."/>
            <person name="Mahillon J."/>
            <person name="Manter D."/>
            <person name="Martinez Y."/>
            <person name="Ricke D."/>
            <person name="Svensson R."/>
            <person name="Jackson P.J."/>
        </authorList>
    </citation>
    <scope>NUCLEOTIDE SEQUENCE [LARGE SCALE GENOMIC DNA]</scope>
    <source>
        <strain>Sterne</strain>
    </source>
</reference>
<reference key="3">
    <citation type="journal article" date="2002" name="Science">
        <title>Comparative genome sequencing for discovery of novel polymorphisms in Bacillus anthracis.</title>
        <authorList>
            <person name="Read T.D."/>
            <person name="Salzberg S.L."/>
            <person name="Pop M."/>
            <person name="Shumway M.F."/>
            <person name="Umayam L."/>
            <person name="Jiang L."/>
            <person name="Holtzapple E."/>
            <person name="Busch J.D."/>
            <person name="Smith K.L."/>
            <person name="Schupp J.M."/>
            <person name="Solomon D."/>
            <person name="Keim P."/>
            <person name="Fraser C.M."/>
        </authorList>
    </citation>
    <scope>NUCLEOTIDE SEQUENCE [GENOMIC DNA]</scope>
    <source>
        <strain>Ames / isolate Florida / A2012</strain>
    </source>
</reference>
<reference key="4">
    <citation type="journal article" date="2009" name="J. Bacteriol.">
        <title>The complete genome sequence of Bacillus anthracis Ames 'Ancestor'.</title>
        <authorList>
            <person name="Ravel J."/>
            <person name="Jiang L."/>
            <person name="Stanley S.T."/>
            <person name="Wilson M.R."/>
            <person name="Decker R.S."/>
            <person name="Read T.D."/>
            <person name="Worsham P."/>
            <person name="Keim P.S."/>
            <person name="Salzberg S.L."/>
            <person name="Fraser-Liggett C.M."/>
            <person name="Rasko D.A."/>
        </authorList>
    </citation>
    <scope>NUCLEOTIDE SEQUENCE [LARGE SCALE GENOMIC DNA]</scope>
    <source>
        <strain>Ames ancestor</strain>
    </source>
</reference>
<accession>P13422</accession>
<accession>Q8KYK2</accession>
<accession>Q9X377</accession>
<keyword id="KW-1003">Cell membrane</keyword>
<keyword id="KW-0472">Membrane</keyword>
<keyword id="KW-0614">Plasmid</keyword>
<keyword id="KW-1185">Reference proteome</keyword>
<keyword id="KW-0812">Transmembrane</keyword>
<keyword id="KW-1133">Transmembrane helix</keyword>
<protein>
    <recommendedName>
        <fullName>Uncharacterized protein pXO1-111/BXA0163/GBAA_pXO1_0163</fullName>
    </recommendedName>
</protein>